<name>Y2549_METMA</name>
<feature type="chain" id="PRO_0000107201" description="Uncharacterized protein MM_2549">
    <location>
        <begin position="1"/>
        <end position="86"/>
    </location>
</feature>
<dbReference type="EMBL" id="AE008384">
    <property type="protein sequence ID" value="AAM32245.1"/>
    <property type="molecule type" value="Genomic_DNA"/>
</dbReference>
<dbReference type="SMR" id="Q8PU08"/>
<dbReference type="KEGG" id="mma:MM_2549"/>
<dbReference type="PATRIC" id="fig|192952.21.peg.2922"/>
<dbReference type="eggNOG" id="arCOG02414">
    <property type="taxonomic scope" value="Archaea"/>
</dbReference>
<dbReference type="HOGENOM" id="CLU_155761_4_0_2"/>
<dbReference type="Proteomes" id="UP000000595">
    <property type="component" value="Chromosome"/>
</dbReference>
<dbReference type="Gene3D" id="3.30.2310.20">
    <property type="entry name" value="RelE-like"/>
    <property type="match status" value="1"/>
</dbReference>
<dbReference type="InterPro" id="IPR035093">
    <property type="entry name" value="RelE/ParE_toxin_dom_sf"/>
</dbReference>
<dbReference type="SUPFAM" id="SSF143011">
    <property type="entry name" value="RelE-like"/>
    <property type="match status" value="1"/>
</dbReference>
<accession>Q8PU08</accession>
<sequence>MYFLKIRSELDSKFEKLAKKNKKQLEIILAKADEILENPHRYKNLKAPMNHLKRVHIDKHFVLVFSIDEESRSVTLEDYDHHDKIY</sequence>
<proteinExistence type="predicted"/>
<protein>
    <recommendedName>
        <fullName>Uncharacterized protein MM_2549</fullName>
    </recommendedName>
</protein>
<reference key="1">
    <citation type="journal article" date="2002" name="J. Mol. Microbiol. Biotechnol.">
        <title>The genome of Methanosarcina mazei: evidence for lateral gene transfer between Bacteria and Archaea.</title>
        <authorList>
            <person name="Deppenmeier U."/>
            <person name="Johann A."/>
            <person name="Hartsch T."/>
            <person name="Merkl R."/>
            <person name="Schmitz R.A."/>
            <person name="Martinez-Arias R."/>
            <person name="Henne A."/>
            <person name="Wiezer A."/>
            <person name="Baeumer S."/>
            <person name="Jacobi C."/>
            <person name="Brueggemann H."/>
            <person name="Lienard T."/>
            <person name="Christmann A."/>
            <person name="Boemecke M."/>
            <person name="Steckel S."/>
            <person name="Bhattacharyya A."/>
            <person name="Lykidis A."/>
            <person name="Overbeek R."/>
            <person name="Klenk H.-P."/>
            <person name="Gunsalus R.P."/>
            <person name="Fritz H.-J."/>
            <person name="Gottschalk G."/>
        </authorList>
    </citation>
    <scope>NUCLEOTIDE SEQUENCE [LARGE SCALE GENOMIC DNA]</scope>
    <source>
        <strain>ATCC BAA-159 / DSM 3647 / Goe1 / Go1 / JCM 11833 / OCM 88</strain>
    </source>
</reference>
<evidence type="ECO:0000305" key="1"/>
<comment type="similarity">
    <text evidence="1">To M.jannaschii MJ1173.</text>
</comment>
<gene>
    <name type="ordered locus">MM_2549</name>
</gene>
<organism>
    <name type="scientific">Methanosarcina mazei (strain ATCC BAA-159 / DSM 3647 / Goe1 / Go1 / JCM 11833 / OCM 88)</name>
    <name type="common">Methanosarcina frisia</name>
    <dbReference type="NCBI Taxonomy" id="192952"/>
    <lineage>
        <taxon>Archaea</taxon>
        <taxon>Methanobacteriati</taxon>
        <taxon>Methanobacteriota</taxon>
        <taxon>Stenosarchaea group</taxon>
        <taxon>Methanomicrobia</taxon>
        <taxon>Methanosarcinales</taxon>
        <taxon>Methanosarcinaceae</taxon>
        <taxon>Methanosarcina</taxon>
    </lineage>
</organism>